<sequence>SALAINQPNYSVLKELGLNED</sequence>
<organism>
    <name type="scientific">Ctenopharyngodon idella</name>
    <name type="common">Grass carp</name>
    <name type="synonym">Leuciscus idella</name>
    <dbReference type="NCBI Taxonomy" id="7959"/>
    <lineage>
        <taxon>Eukaryota</taxon>
        <taxon>Metazoa</taxon>
        <taxon>Chordata</taxon>
        <taxon>Craniata</taxon>
        <taxon>Vertebrata</taxon>
        <taxon>Euteleostomi</taxon>
        <taxon>Actinopterygii</taxon>
        <taxon>Neopterygii</taxon>
        <taxon>Teleostei</taxon>
        <taxon>Ostariophysi</taxon>
        <taxon>Cypriniformes</taxon>
        <taxon>Xenocyprididae</taxon>
        <taxon>Xenocypridinae</taxon>
        <taxon>Ctenopharyngodon</taxon>
    </lineage>
</organism>
<gene>
    <name type="primary">aldh7a1</name>
</gene>
<comment type="catalytic activity">
    <reaction evidence="2">
        <text>(S)-2-amino-6-oxohexanoate + NADP(+) + H2O = L-2-aminoadipate + NADPH + 2 H(+)</text>
        <dbReference type="Rhea" id="RHEA:12304"/>
        <dbReference type="ChEBI" id="CHEBI:15377"/>
        <dbReference type="ChEBI" id="CHEBI:15378"/>
        <dbReference type="ChEBI" id="CHEBI:57783"/>
        <dbReference type="ChEBI" id="CHEBI:58321"/>
        <dbReference type="ChEBI" id="CHEBI:58349"/>
        <dbReference type="ChEBI" id="CHEBI:58672"/>
        <dbReference type="EC" id="1.2.1.31"/>
    </reaction>
</comment>
<comment type="catalytic activity">
    <reaction evidence="2">
        <text>(S)-2-amino-6-oxohexanoate + NAD(+) + H2O = L-2-aminoadipate + NADH + 2 H(+)</text>
        <dbReference type="Rhea" id="RHEA:12308"/>
        <dbReference type="ChEBI" id="CHEBI:15377"/>
        <dbReference type="ChEBI" id="CHEBI:15378"/>
        <dbReference type="ChEBI" id="CHEBI:57540"/>
        <dbReference type="ChEBI" id="CHEBI:57945"/>
        <dbReference type="ChEBI" id="CHEBI:58321"/>
        <dbReference type="ChEBI" id="CHEBI:58672"/>
        <dbReference type="EC" id="1.2.1.31"/>
    </reaction>
</comment>
<comment type="biophysicochemical properties">
    <kinetics>
        <KM evidence="2">2 mM for acetaldehyde</KM>
        <Vmax evidence="2">1.95 umol/min/mg enzyme</Vmax>
    </kinetics>
    <phDependence>
        <text evidence="2">Optimum pH is 9-10.</text>
    </phDependence>
</comment>
<comment type="subunit">
    <text evidence="2">Homotetramer.</text>
</comment>
<comment type="similarity">
    <text evidence="1">Belongs to the aldehyde dehydrogenase family.</text>
</comment>
<name>AL7A1_CTEID</name>
<dbReference type="EC" id="1.2.1.31"/>
<dbReference type="SABIO-RK" id="P84463"/>
<dbReference type="GO" id="GO:0004043">
    <property type="term" value="F:L-aminoadipate-semialdehyde dehydrogenase activity"/>
    <property type="evidence" value="ECO:0007669"/>
    <property type="project" value="UniProtKB-EC"/>
</dbReference>
<proteinExistence type="evidence at protein level"/>
<feature type="chain" id="PRO_0000056494" description="Alpha-aminoadipic semialdehyde dehydrogenase">
    <location>
        <begin position="1"/>
        <end position="21" status="greater than"/>
    </location>
</feature>
<feature type="non-terminal residue" evidence="3">
    <location>
        <position position="21"/>
    </location>
</feature>
<evidence type="ECO:0000255" key="1"/>
<evidence type="ECO:0000269" key="2">
    <source>
    </source>
</evidence>
<evidence type="ECO:0000303" key="3">
    <source>
    </source>
</evidence>
<evidence type="ECO:0000305" key="4"/>
<protein>
    <recommendedName>
        <fullName>Alpha-aminoadipic semialdehyde dehydrogenase</fullName>
        <shortName>Alpha-AASA dehydrogenase</shortName>
        <ecNumber>1.2.1.31</ecNumber>
    </recommendedName>
    <alternativeName>
        <fullName>Aldehyde dehydrogenase family 7 member A1</fullName>
    </alternativeName>
    <alternativeName>
        <fullName>Antiquitin-1</fullName>
    </alternativeName>
    <alternativeName>
        <fullName>Delta1-piperideine-6-carboxylate dehydrogenase</fullName>
        <shortName>P6c dehydrogenase</shortName>
    </alternativeName>
</protein>
<keyword id="KW-0903">Direct protein sequencing</keyword>
<keyword id="KW-0520">NAD</keyword>
<keyword id="KW-0560">Oxidoreductase</keyword>
<accession>P84463</accession>
<reference evidence="4" key="1">
    <citation type="journal article" date="2003" name="Comp. Biochem. Physiol.">
        <title>Purification, N-terminal sequence determination and enzymatic characterization of antiquitin from the liver of grass carp.</title>
        <authorList>
            <person name="Chan W.-M."/>
            <person name="Tang W.-K."/>
            <person name="Cheng C.H."/>
            <person name="Fong W.-P."/>
        </authorList>
    </citation>
    <scope>PROTEIN SEQUENCE</scope>
    <scope>CATALYTIC ACTIVITY</scope>
    <scope>BIOPHYSICOCHEMICAL PROPERTIES</scope>
    <scope>SUBUNIT</scope>
    <source>
        <tissue evidence="2">Liver</tissue>
    </source>
</reference>